<accession>Q6QN11</accession>
<dbReference type="EC" id="1.21.99.3" evidence="1"/>
<dbReference type="EMBL" id="JH116169">
    <property type="status" value="NOT_ANNOTATED_CDS"/>
    <property type="molecule type" value="Genomic_DNA"/>
</dbReference>
<dbReference type="EMBL" id="AY533208">
    <property type="protein sequence ID" value="AAS48449.1"/>
    <property type="molecule type" value="mRNA"/>
</dbReference>
<dbReference type="RefSeq" id="NP_001001625.2">
    <property type="nucleotide sequence ID" value="NM_001001625.2"/>
</dbReference>
<dbReference type="FunCoup" id="Q6QN11">
    <property type="interactions" value="55"/>
</dbReference>
<dbReference type="STRING" id="9823.ENSSSCP00000052428"/>
<dbReference type="PaxDb" id="9823-ENSSSCP00000002752"/>
<dbReference type="Ensembl" id="ENSSSCT00015038415.1">
    <property type="protein sequence ID" value="ENSSSCP00015015253.1"/>
    <property type="gene ID" value="ENSSSCG00015028984.1"/>
</dbReference>
<dbReference type="Ensembl" id="ENSSSCT00025041252.1">
    <property type="protein sequence ID" value="ENSSSCP00025017548.1"/>
    <property type="gene ID" value="ENSSSCG00025030370.1"/>
</dbReference>
<dbReference type="Ensembl" id="ENSSSCT00030053715.1">
    <property type="protein sequence ID" value="ENSSSCP00030024518.1"/>
    <property type="gene ID" value="ENSSSCG00030038604.1"/>
</dbReference>
<dbReference type="Ensembl" id="ENSSSCT00035073325.1">
    <property type="protein sequence ID" value="ENSSSCP00035029743.1"/>
    <property type="gene ID" value="ENSSSCG00035054970.1"/>
</dbReference>
<dbReference type="Ensembl" id="ENSSSCT00040105323.1">
    <property type="protein sequence ID" value="ENSSSCP00040048194.1"/>
    <property type="gene ID" value="ENSSSCG00040075810.1"/>
</dbReference>
<dbReference type="Ensembl" id="ENSSSCT00050004265.1">
    <property type="protein sequence ID" value="ENSSSCP00050001661.1"/>
    <property type="gene ID" value="ENSSSCG00050003235.1"/>
</dbReference>
<dbReference type="Ensembl" id="ENSSSCT00055037029.1">
    <property type="protein sequence ID" value="ENSSSCP00055029431.1"/>
    <property type="gene ID" value="ENSSSCG00055018913.1"/>
</dbReference>
<dbReference type="Ensembl" id="ENSSSCT00060007036.1">
    <property type="protein sequence ID" value="ENSSSCP00060002493.1"/>
    <property type="gene ID" value="ENSSSCG00060005571.1"/>
</dbReference>
<dbReference type="Ensembl" id="ENSSSCT00065051409.1">
    <property type="protein sequence ID" value="ENSSSCP00065022317.1"/>
    <property type="gene ID" value="ENSSSCG00065037645.1"/>
</dbReference>
<dbReference type="Ensembl" id="ENSSSCT00130008356">
    <property type="protein sequence ID" value="ENSSSCP00130005647"/>
    <property type="gene ID" value="ENSSSCG00130004484"/>
</dbReference>
<dbReference type="GeneID" id="414378"/>
<dbReference type="KEGG" id="ssc:414378"/>
<dbReference type="CTD" id="1735"/>
<dbReference type="eggNOG" id="ENOG502S5FA">
    <property type="taxonomic scope" value="Eukaryota"/>
</dbReference>
<dbReference type="HOGENOM" id="CLU_1717459_0_0_1"/>
<dbReference type="InParanoid" id="Q6QN11"/>
<dbReference type="OrthoDB" id="428577at2759"/>
<dbReference type="Reactome" id="R-SSC-350864">
    <property type="pathway name" value="Regulation of thyroid hormone activity"/>
</dbReference>
<dbReference type="Proteomes" id="UP000008227">
    <property type="component" value="Unplaced"/>
</dbReference>
<dbReference type="Proteomes" id="UP000314985">
    <property type="component" value="Unplaced"/>
</dbReference>
<dbReference type="Proteomes" id="UP000694570">
    <property type="component" value="Unplaced"/>
</dbReference>
<dbReference type="Proteomes" id="UP000694571">
    <property type="component" value="Unplaced"/>
</dbReference>
<dbReference type="Proteomes" id="UP000694720">
    <property type="component" value="Unplaced"/>
</dbReference>
<dbReference type="Proteomes" id="UP000694722">
    <property type="component" value="Unplaced"/>
</dbReference>
<dbReference type="Proteomes" id="UP000694723">
    <property type="component" value="Unplaced"/>
</dbReference>
<dbReference type="Proteomes" id="UP000694724">
    <property type="component" value="Unplaced"/>
</dbReference>
<dbReference type="Proteomes" id="UP000694725">
    <property type="component" value="Unplaced"/>
</dbReference>
<dbReference type="Proteomes" id="UP000694726">
    <property type="component" value="Unplaced"/>
</dbReference>
<dbReference type="Proteomes" id="UP000694727">
    <property type="component" value="Unplaced"/>
</dbReference>
<dbReference type="Proteomes" id="UP000694728">
    <property type="component" value="Unplaced"/>
</dbReference>
<dbReference type="Bgee" id="ENSSSCG00000036990">
    <property type="expression patterns" value="Expressed in Ammon's horn and 16 other cell types or tissues"/>
</dbReference>
<dbReference type="GO" id="GO:0010008">
    <property type="term" value="C:endosome membrane"/>
    <property type="evidence" value="ECO:0007669"/>
    <property type="project" value="UniProtKB-SubCell"/>
</dbReference>
<dbReference type="GO" id="GO:0005886">
    <property type="term" value="C:plasma membrane"/>
    <property type="evidence" value="ECO:0007669"/>
    <property type="project" value="UniProtKB-SubCell"/>
</dbReference>
<dbReference type="GO" id="GO:0004800">
    <property type="term" value="F:thyroxine 5'-deiodinase activity"/>
    <property type="evidence" value="ECO:0007669"/>
    <property type="project" value="InterPro"/>
</dbReference>
<dbReference type="GO" id="GO:0033798">
    <property type="term" value="F:thyroxine 5-deiodinase activity"/>
    <property type="evidence" value="ECO:0000250"/>
    <property type="project" value="UniProtKB"/>
</dbReference>
<dbReference type="GO" id="GO:0042446">
    <property type="term" value="P:hormone biosynthetic process"/>
    <property type="evidence" value="ECO:0007669"/>
    <property type="project" value="UniProtKB-KW"/>
</dbReference>
<dbReference type="GO" id="GO:0042404">
    <property type="term" value="P:thyroid hormone catabolic process"/>
    <property type="evidence" value="ECO:0000314"/>
    <property type="project" value="UniProtKB"/>
</dbReference>
<dbReference type="GO" id="GO:0042403">
    <property type="term" value="P:thyroid hormone metabolic process"/>
    <property type="evidence" value="ECO:0000318"/>
    <property type="project" value="GO_Central"/>
</dbReference>
<dbReference type="FunFam" id="3.40.30.10:FF:000239">
    <property type="entry name" value="Iodothyronine deiodinase"/>
    <property type="match status" value="1"/>
</dbReference>
<dbReference type="Gene3D" id="3.40.30.10">
    <property type="entry name" value="Glutaredoxin"/>
    <property type="match status" value="1"/>
</dbReference>
<dbReference type="InterPro" id="IPR000643">
    <property type="entry name" value="Iodothyronine_deiodinase"/>
</dbReference>
<dbReference type="InterPro" id="IPR008261">
    <property type="entry name" value="Iodothyronine_deiodinase_AS"/>
</dbReference>
<dbReference type="InterPro" id="IPR027252">
    <property type="entry name" value="Iodothyronine_deiodinase_I/III"/>
</dbReference>
<dbReference type="InterPro" id="IPR036249">
    <property type="entry name" value="Thioredoxin-like_sf"/>
</dbReference>
<dbReference type="PANTHER" id="PTHR11781">
    <property type="entry name" value="IODOTHYRONINE DEIODINASE"/>
    <property type="match status" value="1"/>
</dbReference>
<dbReference type="PANTHER" id="PTHR11781:SF4">
    <property type="entry name" value="THYROXINE 5-DEIODINASE"/>
    <property type="match status" value="1"/>
</dbReference>
<dbReference type="Pfam" id="PF00837">
    <property type="entry name" value="T4_deiodinase"/>
    <property type="match status" value="1"/>
</dbReference>
<dbReference type="PIRSF" id="PIRSF001330">
    <property type="entry name" value="IOD"/>
    <property type="match status" value="1"/>
</dbReference>
<dbReference type="PIRSF" id="PIRSF500144">
    <property type="entry name" value="IODI_III"/>
    <property type="match status" value="1"/>
</dbReference>
<dbReference type="SUPFAM" id="SSF52833">
    <property type="entry name" value="Thioredoxin-like"/>
    <property type="match status" value="1"/>
</dbReference>
<dbReference type="PROSITE" id="PS01205">
    <property type="entry name" value="T4_DEIODINASE"/>
    <property type="match status" value="1"/>
</dbReference>
<feature type="chain" id="PRO_0000223868" description="Thyroxine 5-deiodinase">
    <location>
        <begin position="1"/>
        <end position="305"/>
    </location>
</feature>
<feature type="topological domain" description="Cytoplasmic" evidence="2">
    <location>
        <begin position="1"/>
        <end position="43"/>
    </location>
</feature>
<feature type="transmembrane region" description="Helical; Signal-anchor for type II membrane protein" evidence="2">
    <location>
        <begin position="44"/>
        <end position="63"/>
    </location>
</feature>
<feature type="topological domain" description="Extracellular" evidence="2">
    <location>
        <begin position="64"/>
        <end position="305"/>
    </location>
</feature>
<feature type="region of interest" description="Disordered" evidence="3">
    <location>
        <begin position="79"/>
        <end position="98"/>
    </location>
</feature>
<feature type="compositionally biased region" description="Acidic residues" evidence="3">
    <location>
        <begin position="82"/>
        <end position="96"/>
    </location>
</feature>
<feature type="active site" evidence="1">
    <location>
        <position position="171"/>
    </location>
</feature>
<feature type="non-standard amino acid" description="Selenocysteine" evidence="1">
    <location>
        <position position="171"/>
    </location>
</feature>
<feature type="sequence conflict" description="In Ref. 2; AAS48449." evidence="5" ref="2">
    <original>R</original>
    <variation>H</variation>
    <location>
        <position position="30"/>
    </location>
</feature>
<comment type="function">
    <text evidence="1 4">Plays a crucial role in the metabolism of thyroid hormones (TH) and has specific roles in TH activation and inactivation by deiodination, particularly in different tissues. Catalyzes the deiodination of L-thyroxine (T4) to 3,3',5'-triiodothyronine (rT3), 3,5-diiodothyronine (3,5-T2) to 3-monoiodothyronine (3-T1), rT3 to 3',5'-diiodothyronine (3',5'-T2) and 3,3'-diiodothyronine (3,3'-T2) to 3'-monoiodothyronine (3'-T1) via inner-ring deiodination (IRD) (By similarity). Catalyzes the deiodination of 3,5,3'-triiodothyronine (T3) to 3,3'-diiodothyronine (3,3'-T2) via IRD (PubMed:15192045). Catalyzes the deiodination of 3-T1 to L-thyronine (T0) via outer-ring deiodination (ORD) (By similarity). Catalyzes the tyrosyl ring deiodinations of 3,3',5,5'-tetraiodothyronamine, 3,3',5'-triiodothyronamine, 3,5,3'-triiodothyronamine, 3,5-diiodothyronamine, 3,3'-diiodothyronamine and 3-iodothyronamine (By similarity).</text>
</comment>
<comment type="catalytic activity">
    <reaction evidence="1">
        <text>3,3',5'-triiodo-L-thyronine + iodide + A + H(+) = L-thyroxine + AH2</text>
        <dbReference type="Rhea" id="RHEA:18897"/>
        <dbReference type="ChEBI" id="CHEBI:13193"/>
        <dbReference type="ChEBI" id="CHEBI:15378"/>
        <dbReference type="ChEBI" id="CHEBI:16382"/>
        <dbReference type="ChEBI" id="CHEBI:17499"/>
        <dbReference type="ChEBI" id="CHEBI:57261"/>
        <dbReference type="ChEBI" id="CHEBI:58448"/>
        <dbReference type="EC" id="1.21.99.3"/>
    </reaction>
    <physiologicalReaction direction="right-to-left" evidence="1">
        <dbReference type="Rhea" id="RHEA:18899"/>
    </physiologicalReaction>
</comment>
<comment type="catalytic activity">
    <reaction evidence="4">
        <text>3,3'-diiodo-L-thyronine + iodide + A + H(+) = 3,3',5-triiodo-L-thyronine + AH2</text>
        <dbReference type="Rhea" id="RHEA:82571"/>
        <dbReference type="ChEBI" id="CHEBI:13193"/>
        <dbReference type="ChEBI" id="CHEBI:15378"/>
        <dbReference type="ChEBI" id="CHEBI:16382"/>
        <dbReference type="ChEBI" id="CHEBI:17499"/>
        <dbReference type="ChEBI" id="CHEBI:176514"/>
        <dbReference type="ChEBI" id="CHEBI:533015"/>
    </reaction>
    <physiologicalReaction direction="right-to-left" evidence="6">
        <dbReference type="Rhea" id="RHEA:82573"/>
    </physiologicalReaction>
</comment>
<comment type="catalytic activity">
    <reaction evidence="1">
        <text>3-iodo-L-thyronine + iodide + A + H(+) = 3,5-diiodo-L-thyronine + AH2</text>
        <dbReference type="Rhea" id="RHEA:82895"/>
        <dbReference type="ChEBI" id="CHEBI:13193"/>
        <dbReference type="ChEBI" id="CHEBI:15378"/>
        <dbReference type="ChEBI" id="CHEBI:16382"/>
        <dbReference type="ChEBI" id="CHEBI:17499"/>
        <dbReference type="ChEBI" id="CHEBI:232626"/>
        <dbReference type="ChEBI" id="CHEBI:232627"/>
    </reaction>
    <physiologicalReaction direction="right-to-left" evidence="1">
        <dbReference type="Rhea" id="RHEA:82897"/>
    </physiologicalReaction>
</comment>
<comment type="catalytic activity">
    <reaction evidence="1">
        <text>L-thyronine + iodide + A + H(+) = 3-iodo-L-thyronine + AH2</text>
        <dbReference type="Rhea" id="RHEA:83771"/>
        <dbReference type="ChEBI" id="CHEBI:13193"/>
        <dbReference type="ChEBI" id="CHEBI:15378"/>
        <dbReference type="ChEBI" id="CHEBI:16382"/>
        <dbReference type="ChEBI" id="CHEBI:17499"/>
        <dbReference type="ChEBI" id="CHEBI:232627"/>
        <dbReference type="ChEBI" id="CHEBI:233333"/>
    </reaction>
    <physiologicalReaction direction="right-to-left" evidence="1">
        <dbReference type="Rhea" id="RHEA:83773"/>
    </physiologicalReaction>
</comment>
<comment type="catalytic activity">
    <reaction evidence="1">
        <text>3',5'-diiodo-L-thyronine + iodide + A + H(+) = 3,3',5'-triiodo-L-thyronine + AH2</text>
        <dbReference type="Rhea" id="RHEA:83775"/>
        <dbReference type="ChEBI" id="CHEBI:13193"/>
        <dbReference type="ChEBI" id="CHEBI:15378"/>
        <dbReference type="ChEBI" id="CHEBI:16382"/>
        <dbReference type="ChEBI" id="CHEBI:17499"/>
        <dbReference type="ChEBI" id="CHEBI:57261"/>
        <dbReference type="ChEBI" id="CHEBI:195762"/>
    </reaction>
    <physiologicalReaction direction="right-to-left" evidence="1">
        <dbReference type="Rhea" id="RHEA:83777"/>
    </physiologicalReaction>
</comment>
<comment type="catalytic activity">
    <reaction evidence="1">
        <text>3'-iodo-L-thyronine + iodide + A + H(+) = 3,3'-diiodo-L-thyronine + AH2</text>
        <dbReference type="Rhea" id="RHEA:83779"/>
        <dbReference type="ChEBI" id="CHEBI:13193"/>
        <dbReference type="ChEBI" id="CHEBI:15378"/>
        <dbReference type="ChEBI" id="CHEBI:16382"/>
        <dbReference type="ChEBI" id="CHEBI:17499"/>
        <dbReference type="ChEBI" id="CHEBI:176514"/>
        <dbReference type="ChEBI" id="CHEBI:232695"/>
    </reaction>
    <physiologicalReaction direction="right-to-left" evidence="1">
        <dbReference type="Rhea" id="RHEA:83781"/>
    </physiologicalReaction>
</comment>
<comment type="catalytic activity">
    <reaction evidence="1">
        <text>3,3',5'-triiodothyronamine + iodide + A + H(+) = 3,3',5,5'-tetraiodothyronamine + AH2</text>
        <dbReference type="Rhea" id="RHEA:83807"/>
        <dbReference type="ChEBI" id="CHEBI:13193"/>
        <dbReference type="ChEBI" id="CHEBI:15378"/>
        <dbReference type="ChEBI" id="CHEBI:16382"/>
        <dbReference type="ChEBI" id="CHEBI:17499"/>
        <dbReference type="ChEBI" id="CHEBI:233343"/>
        <dbReference type="ChEBI" id="CHEBI:233344"/>
    </reaction>
    <physiologicalReaction direction="right-to-left" evidence="1">
        <dbReference type="Rhea" id="RHEA:83809"/>
    </physiologicalReaction>
</comment>
<comment type="catalytic activity">
    <reaction evidence="1">
        <text>3',5'-diiodothyronamine + iodide + A + H(+) = 3,3',5'-triiodothyronamine + AH2</text>
        <dbReference type="Rhea" id="RHEA:83799"/>
        <dbReference type="ChEBI" id="CHEBI:13193"/>
        <dbReference type="ChEBI" id="CHEBI:15378"/>
        <dbReference type="ChEBI" id="CHEBI:16382"/>
        <dbReference type="ChEBI" id="CHEBI:17499"/>
        <dbReference type="ChEBI" id="CHEBI:233342"/>
        <dbReference type="ChEBI" id="CHEBI:233343"/>
    </reaction>
    <physiologicalReaction direction="right-to-left" evidence="1">
        <dbReference type="Rhea" id="RHEA:83801"/>
    </physiologicalReaction>
</comment>
<comment type="catalytic activity">
    <reaction evidence="1">
        <text>3,3'-diiodothyronamine + iodide + A + H(+) = 3,3',5-triiodothyronamine + AH2</text>
        <dbReference type="Rhea" id="RHEA:83811"/>
        <dbReference type="ChEBI" id="CHEBI:13193"/>
        <dbReference type="ChEBI" id="CHEBI:15378"/>
        <dbReference type="ChEBI" id="CHEBI:16382"/>
        <dbReference type="ChEBI" id="CHEBI:17499"/>
        <dbReference type="ChEBI" id="CHEBI:233341"/>
        <dbReference type="ChEBI" id="CHEBI:233426"/>
    </reaction>
    <physiologicalReaction direction="right-to-left" evidence="1">
        <dbReference type="Rhea" id="RHEA:83813"/>
    </physiologicalReaction>
</comment>
<comment type="catalytic activity">
    <reaction evidence="1">
        <text>3-iodothyronamine + iodide + A + H(+) = 3,5-diiodothyronamine + AH2</text>
        <dbReference type="Rhea" id="RHEA:83823"/>
        <dbReference type="ChEBI" id="CHEBI:13193"/>
        <dbReference type="ChEBI" id="CHEBI:15378"/>
        <dbReference type="ChEBI" id="CHEBI:16382"/>
        <dbReference type="ChEBI" id="CHEBI:17499"/>
        <dbReference type="ChEBI" id="CHEBI:231647"/>
        <dbReference type="ChEBI" id="CHEBI:233340"/>
    </reaction>
    <physiologicalReaction direction="right-to-left" evidence="1">
        <dbReference type="Rhea" id="RHEA:83825"/>
    </physiologicalReaction>
</comment>
<comment type="catalytic activity">
    <reaction evidence="1">
        <text>3'-iodothyronamine + iodide + A + H(+) = 3,3'-diiodothyronamine + AH2</text>
        <dbReference type="Rhea" id="RHEA:83815"/>
        <dbReference type="ChEBI" id="CHEBI:13193"/>
        <dbReference type="ChEBI" id="CHEBI:15378"/>
        <dbReference type="ChEBI" id="CHEBI:16382"/>
        <dbReference type="ChEBI" id="CHEBI:17499"/>
        <dbReference type="ChEBI" id="CHEBI:233339"/>
        <dbReference type="ChEBI" id="CHEBI:233341"/>
    </reaction>
    <physiologicalReaction direction="right-to-left" evidence="1">
        <dbReference type="Rhea" id="RHEA:83817"/>
    </physiologicalReaction>
</comment>
<comment type="catalytic activity">
    <reaction evidence="1">
        <text>thyronamine + iodide + A + H(+) = 3-iodothyronamine + AH2</text>
        <dbReference type="Rhea" id="RHEA:83819"/>
        <dbReference type="ChEBI" id="CHEBI:13193"/>
        <dbReference type="ChEBI" id="CHEBI:15378"/>
        <dbReference type="ChEBI" id="CHEBI:16382"/>
        <dbReference type="ChEBI" id="CHEBI:17499"/>
        <dbReference type="ChEBI" id="CHEBI:231647"/>
        <dbReference type="ChEBI" id="CHEBI:233334"/>
    </reaction>
    <physiologicalReaction direction="right-to-left" evidence="1">
        <dbReference type="Rhea" id="RHEA:83821"/>
    </physiologicalReaction>
</comment>
<comment type="subunit">
    <text evidence="1">Monomer. Homodimer. May undergo minor heretodimerization with DIO1 and DIO2 (By similarity).</text>
</comment>
<comment type="subcellular location">
    <subcellularLocation>
        <location evidence="1">Cell membrane</location>
        <topology evidence="2">Single-pass type II membrane protein</topology>
    </subcellularLocation>
    <subcellularLocation>
        <location evidence="1">Endosome membrane</location>
        <topology evidence="2">Single-pass type II membrane protein</topology>
    </subcellularLocation>
</comment>
<comment type="tissue specificity">
    <text evidence="4">Expressed in brain only.</text>
</comment>
<comment type="similarity">
    <text evidence="5">Belongs to the iodothyronine deiodinase family.</text>
</comment>
<comment type="caution">
    <text evidence="5">It is uncertain whether Met-1 or Met-28 is the initiator.</text>
</comment>
<organism>
    <name type="scientific">Sus scrofa</name>
    <name type="common">Pig</name>
    <dbReference type="NCBI Taxonomy" id="9823"/>
    <lineage>
        <taxon>Eukaryota</taxon>
        <taxon>Metazoa</taxon>
        <taxon>Chordata</taxon>
        <taxon>Craniata</taxon>
        <taxon>Vertebrata</taxon>
        <taxon>Euteleostomi</taxon>
        <taxon>Mammalia</taxon>
        <taxon>Eutheria</taxon>
        <taxon>Laurasiatheria</taxon>
        <taxon>Artiodactyla</taxon>
        <taxon>Suina</taxon>
        <taxon>Suidae</taxon>
        <taxon>Sus</taxon>
    </lineage>
</organism>
<protein>
    <recommendedName>
        <fullName>Thyroxine 5-deiodinase</fullName>
        <ecNumber evidence="1">1.21.99.3</ecNumber>
    </recommendedName>
    <alternativeName>
        <fullName>5DIII</fullName>
    </alternativeName>
    <alternativeName>
        <fullName>DIOIII</fullName>
    </alternativeName>
    <alternativeName>
        <fullName>Type 3 DI</fullName>
    </alternativeName>
    <alternativeName>
        <fullName>Type III iodothyronine deiodinase</fullName>
    </alternativeName>
</protein>
<proteinExistence type="evidence at protein level"/>
<sequence length="305" mass="34042">MPGQAGRRRLVGGGCRGSQGPLGGAATMLRSLLLHSLRLCAQTASCLVLFPRFLGTACMLWLLDFLCIRKHLLGRRRRGEPETEVELNSDGDEVPPDDPPICVSDDNRLCTLASLRAVWHGQKLDFFKQAHEGGPAPNSEVVLPDGFQNQHILDYARGNRPLVLNFGSCTUPPFMARMSAFQRLVTKYQRDVDFLIIYIEEAHPSDGWVTTDSPYSIPQHRSLEDRVSAARVLQQGAPECSLVLDTMANSSSSAYGAYFERLYVIQSGTIMYQGGRGPDGYQVSELRTWLERYDQQLHGPQPRRV</sequence>
<keyword id="KW-1003">Cell membrane</keyword>
<keyword id="KW-0967">Endosome</keyword>
<keyword id="KW-0472">Membrane</keyword>
<keyword id="KW-0560">Oxidoreductase</keyword>
<keyword id="KW-1185">Reference proteome</keyword>
<keyword id="KW-0712">Selenocysteine</keyword>
<keyword id="KW-0735">Signal-anchor</keyword>
<keyword id="KW-0893">Thyroid hormones biosynthesis</keyword>
<keyword id="KW-0812">Transmembrane</keyword>
<keyword id="KW-1133">Transmembrane helix</keyword>
<reference key="1">
    <citation type="submission" date="2009-11" db="EMBL/GenBank/DDBJ databases">
        <authorList>
            <consortium name="Porcine genome sequencing project"/>
        </authorList>
    </citation>
    <scope>NUCLEOTIDE SEQUENCE [LARGE SCALE GENOMIC DNA]</scope>
</reference>
<reference key="2">
    <citation type="journal article" date="2004" name="Endocrinology">
        <title>Characteristics and thyroid state-dependent regulation of iodothyronine deiodinases in pigs.</title>
        <authorList>
            <person name="Wassen F.W.J.S."/>
            <person name="Klootwijk W."/>
            <person name="Kaptein E."/>
            <person name="Duncker D.J."/>
            <person name="Visser T.J."/>
            <person name="Kuiper G.G.J.M."/>
        </authorList>
    </citation>
    <scope>NUCLEOTIDE SEQUENCE [MRNA] OF 28-305</scope>
    <scope>FUNCTION</scope>
    <scope>TISSUE SPECIFICITY</scope>
    <scope>CATALYTIC ACTIVITY</scope>
    <source>
        <strain>Landrace X Yorkshire</strain>
        <tissue>Brain</tissue>
    </source>
</reference>
<name>IOD3_PIG</name>
<evidence type="ECO:0000250" key="1">
    <source>
        <dbReference type="UniProtKB" id="P55073"/>
    </source>
</evidence>
<evidence type="ECO:0000255" key="2"/>
<evidence type="ECO:0000256" key="3">
    <source>
        <dbReference type="SAM" id="MobiDB-lite"/>
    </source>
</evidence>
<evidence type="ECO:0000269" key="4">
    <source>
    </source>
</evidence>
<evidence type="ECO:0000305" key="5"/>
<evidence type="ECO:0000305" key="6">
    <source>
    </source>
</evidence>
<gene>
    <name type="primary">DIO3</name>
</gene>